<keyword id="KW-0249">Electron transport</keyword>
<keyword id="KW-0349">Heme</keyword>
<keyword id="KW-0408">Iron</keyword>
<keyword id="KW-0472">Membrane</keyword>
<keyword id="KW-0479">Metal-binding</keyword>
<keyword id="KW-0496">Mitochondrion</keyword>
<keyword id="KW-0999">Mitochondrion inner membrane</keyword>
<keyword id="KW-0679">Respiratory chain</keyword>
<keyword id="KW-0812">Transmembrane</keyword>
<keyword id="KW-1133">Transmembrane helix</keyword>
<keyword id="KW-0813">Transport</keyword>
<keyword id="KW-0830">Ubiquinone</keyword>
<evidence type="ECO:0000250" key="1"/>
<evidence type="ECO:0000250" key="2">
    <source>
        <dbReference type="UniProtKB" id="P00157"/>
    </source>
</evidence>
<evidence type="ECO:0000255" key="3">
    <source>
        <dbReference type="PROSITE-ProRule" id="PRU00967"/>
    </source>
</evidence>
<evidence type="ECO:0000255" key="4">
    <source>
        <dbReference type="PROSITE-ProRule" id="PRU00968"/>
    </source>
</evidence>
<name>CYB_DOBIN</name>
<accession>Q1PG57</accession>
<proteinExistence type="inferred from homology"/>
<comment type="function">
    <text evidence="2">Component of the ubiquinol-cytochrome c reductase complex (complex III or cytochrome b-c1 complex) that is part of the mitochondrial respiratory chain. The b-c1 complex mediates electron transfer from ubiquinol to cytochrome c. Contributes to the generation of a proton gradient across the mitochondrial membrane that is then used for ATP synthesis.</text>
</comment>
<comment type="cofactor">
    <cofactor evidence="2">
        <name>heme b</name>
        <dbReference type="ChEBI" id="CHEBI:60344"/>
    </cofactor>
    <text evidence="2">Binds 2 heme b groups non-covalently.</text>
</comment>
<comment type="subunit">
    <text evidence="2">The cytochrome bc1 complex contains 11 subunits: 3 respiratory subunits (MT-CYB, CYC1 and UQCRFS1), 2 core proteins (UQCRC1 and UQCRC2) and 6 low-molecular weight proteins (UQCRH/QCR6, UQCRB/QCR7, UQCRQ/QCR8, UQCR10/QCR9, UQCR11/QCR10 and a cleavage product of UQCRFS1). This cytochrome bc1 complex then forms a dimer.</text>
</comment>
<comment type="subcellular location">
    <subcellularLocation>
        <location evidence="2">Mitochondrion inner membrane</location>
        <topology evidence="2">Multi-pass membrane protein</topology>
    </subcellularLocation>
</comment>
<comment type="miscellaneous">
    <text evidence="1">Heme 1 (or BL or b562) is low-potential and absorbs at about 562 nm, and heme 2 (or BH or b566) is high-potential and absorbs at about 566 nm.</text>
</comment>
<comment type="similarity">
    <text evidence="3 4">Belongs to the cytochrome b family.</text>
</comment>
<comment type="caution">
    <text evidence="2">The full-length protein contains only eight transmembrane helices, not nine as predicted by bioinformatics tools.</text>
</comment>
<organism>
    <name type="scientific">Dobsonia inermis</name>
    <name type="common">Solomons naked-backed fruit bat</name>
    <dbReference type="NCBI Taxonomy" id="170214"/>
    <lineage>
        <taxon>Eukaryota</taxon>
        <taxon>Metazoa</taxon>
        <taxon>Chordata</taxon>
        <taxon>Craniata</taxon>
        <taxon>Vertebrata</taxon>
        <taxon>Euteleostomi</taxon>
        <taxon>Mammalia</taxon>
        <taxon>Eutheria</taxon>
        <taxon>Laurasiatheria</taxon>
        <taxon>Chiroptera</taxon>
        <taxon>Yinpterochiroptera</taxon>
        <taxon>Pteropodoidea</taxon>
        <taxon>Pteropodidae</taxon>
        <taxon>Pteropodinae</taxon>
        <taxon>Dobsonia</taxon>
    </lineage>
</organism>
<dbReference type="EMBL" id="DQ445704">
    <property type="protein sequence ID" value="ABE02424.1"/>
    <property type="molecule type" value="Genomic_DNA"/>
</dbReference>
<dbReference type="SMR" id="Q1PG57"/>
<dbReference type="GO" id="GO:0005743">
    <property type="term" value="C:mitochondrial inner membrane"/>
    <property type="evidence" value="ECO:0007669"/>
    <property type="project" value="UniProtKB-SubCell"/>
</dbReference>
<dbReference type="GO" id="GO:0045275">
    <property type="term" value="C:respiratory chain complex III"/>
    <property type="evidence" value="ECO:0007669"/>
    <property type="project" value="InterPro"/>
</dbReference>
<dbReference type="GO" id="GO:0046872">
    <property type="term" value="F:metal ion binding"/>
    <property type="evidence" value="ECO:0007669"/>
    <property type="project" value="UniProtKB-KW"/>
</dbReference>
<dbReference type="GO" id="GO:0008121">
    <property type="term" value="F:ubiquinol-cytochrome-c reductase activity"/>
    <property type="evidence" value="ECO:0007669"/>
    <property type="project" value="InterPro"/>
</dbReference>
<dbReference type="GO" id="GO:0006122">
    <property type="term" value="P:mitochondrial electron transport, ubiquinol to cytochrome c"/>
    <property type="evidence" value="ECO:0007669"/>
    <property type="project" value="TreeGrafter"/>
</dbReference>
<dbReference type="CDD" id="cd00290">
    <property type="entry name" value="cytochrome_b_C"/>
    <property type="match status" value="1"/>
</dbReference>
<dbReference type="CDD" id="cd00284">
    <property type="entry name" value="Cytochrome_b_N"/>
    <property type="match status" value="1"/>
</dbReference>
<dbReference type="FunFam" id="1.20.810.10:FF:000002">
    <property type="entry name" value="Cytochrome b"/>
    <property type="match status" value="1"/>
</dbReference>
<dbReference type="Gene3D" id="1.20.810.10">
    <property type="entry name" value="Cytochrome Bc1 Complex, Chain C"/>
    <property type="match status" value="1"/>
</dbReference>
<dbReference type="InterPro" id="IPR005798">
    <property type="entry name" value="Cyt_b/b6_C"/>
</dbReference>
<dbReference type="InterPro" id="IPR036150">
    <property type="entry name" value="Cyt_b/b6_C_sf"/>
</dbReference>
<dbReference type="InterPro" id="IPR005797">
    <property type="entry name" value="Cyt_b/b6_N"/>
</dbReference>
<dbReference type="InterPro" id="IPR027387">
    <property type="entry name" value="Cytb/b6-like_sf"/>
</dbReference>
<dbReference type="InterPro" id="IPR030689">
    <property type="entry name" value="Cytochrome_b"/>
</dbReference>
<dbReference type="InterPro" id="IPR048260">
    <property type="entry name" value="Cytochrome_b_C_euk/bac"/>
</dbReference>
<dbReference type="InterPro" id="IPR048259">
    <property type="entry name" value="Cytochrome_b_N_euk/bac"/>
</dbReference>
<dbReference type="InterPro" id="IPR016174">
    <property type="entry name" value="Di-haem_cyt_TM"/>
</dbReference>
<dbReference type="PANTHER" id="PTHR19271">
    <property type="entry name" value="CYTOCHROME B"/>
    <property type="match status" value="1"/>
</dbReference>
<dbReference type="PANTHER" id="PTHR19271:SF16">
    <property type="entry name" value="CYTOCHROME B"/>
    <property type="match status" value="1"/>
</dbReference>
<dbReference type="Pfam" id="PF00032">
    <property type="entry name" value="Cytochrom_B_C"/>
    <property type="match status" value="1"/>
</dbReference>
<dbReference type="Pfam" id="PF00033">
    <property type="entry name" value="Cytochrome_B"/>
    <property type="match status" value="1"/>
</dbReference>
<dbReference type="PIRSF" id="PIRSF038885">
    <property type="entry name" value="COB"/>
    <property type="match status" value="1"/>
</dbReference>
<dbReference type="SUPFAM" id="SSF81648">
    <property type="entry name" value="a domain/subunit of cytochrome bc1 complex (Ubiquinol-cytochrome c reductase)"/>
    <property type="match status" value="1"/>
</dbReference>
<dbReference type="SUPFAM" id="SSF81342">
    <property type="entry name" value="Transmembrane di-heme cytochromes"/>
    <property type="match status" value="1"/>
</dbReference>
<dbReference type="PROSITE" id="PS51003">
    <property type="entry name" value="CYTB_CTER"/>
    <property type="match status" value="1"/>
</dbReference>
<dbReference type="PROSITE" id="PS51002">
    <property type="entry name" value="CYTB_NTER"/>
    <property type="match status" value="1"/>
</dbReference>
<sequence length="379" mass="42580">MTNIRKSHPLFKIMNDSLVDLPAPSNISSWWNFGSLLGICLGIQILTGLFLAMHYTSDTATAFQSVTHICRDVNYGWALRYLHANGASMFFICLFLHVGRGLYYGSYIYTETWNVGIALLFAVMATAFMGYVLPWGQMSFWGATVITNLLSAIPYIGTDLVEWIWGGFSVDKATLTRFFAFHFLLPFIISALVVVHLLFLHETGSNNPTGIPSDMDMIPFHPYYTIKDMLGVLVMILALLTLVLFSPDLLGDPDNYIPANPLNTPPHIKPEWYFLFAYAILRSIPNKLGGVLALVLSILILALMPLLHTSKQRSMMFRPLSQCLFWLLVADLLTLTWIGGQPVEHPFIIIGQLASILYFSLILVLMPLVSIAENHLLKW</sequence>
<protein>
    <recommendedName>
        <fullName>Cytochrome b</fullName>
    </recommendedName>
    <alternativeName>
        <fullName>Complex III subunit 3</fullName>
    </alternativeName>
    <alternativeName>
        <fullName>Complex III subunit III</fullName>
    </alternativeName>
    <alternativeName>
        <fullName>Cytochrome b-c1 complex subunit 3</fullName>
    </alternativeName>
    <alternativeName>
        <fullName>Ubiquinol-cytochrome-c reductase complex cytochrome b subunit</fullName>
    </alternativeName>
</protein>
<feature type="chain" id="PRO_0000254688" description="Cytochrome b">
    <location>
        <begin position="1"/>
        <end position="379"/>
    </location>
</feature>
<feature type="transmembrane region" description="Helical" evidence="2">
    <location>
        <begin position="33"/>
        <end position="53"/>
    </location>
</feature>
<feature type="transmembrane region" description="Helical" evidence="2">
    <location>
        <begin position="77"/>
        <end position="98"/>
    </location>
</feature>
<feature type="transmembrane region" description="Helical" evidence="2">
    <location>
        <begin position="113"/>
        <end position="133"/>
    </location>
</feature>
<feature type="transmembrane region" description="Helical" evidence="2">
    <location>
        <begin position="178"/>
        <end position="198"/>
    </location>
</feature>
<feature type="transmembrane region" description="Helical" evidence="2">
    <location>
        <begin position="226"/>
        <end position="246"/>
    </location>
</feature>
<feature type="transmembrane region" description="Helical" evidence="2">
    <location>
        <begin position="288"/>
        <end position="308"/>
    </location>
</feature>
<feature type="transmembrane region" description="Helical" evidence="2">
    <location>
        <begin position="320"/>
        <end position="340"/>
    </location>
</feature>
<feature type="transmembrane region" description="Helical" evidence="2">
    <location>
        <begin position="347"/>
        <end position="367"/>
    </location>
</feature>
<feature type="binding site" description="axial binding residue" evidence="2">
    <location>
        <position position="83"/>
    </location>
    <ligand>
        <name>heme b</name>
        <dbReference type="ChEBI" id="CHEBI:60344"/>
        <label>b562</label>
    </ligand>
    <ligandPart>
        <name>Fe</name>
        <dbReference type="ChEBI" id="CHEBI:18248"/>
    </ligandPart>
</feature>
<feature type="binding site" description="axial binding residue" evidence="2">
    <location>
        <position position="97"/>
    </location>
    <ligand>
        <name>heme b</name>
        <dbReference type="ChEBI" id="CHEBI:60344"/>
        <label>b566</label>
    </ligand>
    <ligandPart>
        <name>Fe</name>
        <dbReference type="ChEBI" id="CHEBI:18248"/>
    </ligandPart>
</feature>
<feature type="binding site" description="axial binding residue" evidence="2">
    <location>
        <position position="182"/>
    </location>
    <ligand>
        <name>heme b</name>
        <dbReference type="ChEBI" id="CHEBI:60344"/>
        <label>b562</label>
    </ligand>
    <ligandPart>
        <name>Fe</name>
        <dbReference type="ChEBI" id="CHEBI:18248"/>
    </ligandPart>
</feature>
<feature type="binding site" description="axial binding residue" evidence="2">
    <location>
        <position position="196"/>
    </location>
    <ligand>
        <name>heme b</name>
        <dbReference type="ChEBI" id="CHEBI:60344"/>
        <label>b566</label>
    </ligand>
    <ligandPart>
        <name>Fe</name>
        <dbReference type="ChEBI" id="CHEBI:18248"/>
    </ligandPart>
</feature>
<feature type="binding site" evidence="2">
    <location>
        <position position="201"/>
    </location>
    <ligand>
        <name>a ubiquinone</name>
        <dbReference type="ChEBI" id="CHEBI:16389"/>
    </ligand>
</feature>
<geneLocation type="mitochondrion"/>
<gene>
    <name type="primary">MT-CYB</name>
    <name type="synonym">COB</name>
    <name type="synonym">CYTB</name>
    <name type="synonym">MTCYB</name>
</gene>
<reference key="1">
    <citation type="submission" date="2006-03" db="EMBL/GenBank/DDBJ databases">
        <title>Phylogenetic relationships of the enigmatic harpy fruit bat, Harpyionycteris (Mammalia: Chiroptera: Pteropodidae).</title>
        <authorList>
            <person name="Giannini N.P."/>
            <person name="Almeida F.C."/>
            <person name="DeSalle R."/>
            <person name="Simmons N.B."/>
        </authorList>
    </citation>
    <scope>NUCLEOTIDE SEQUENCE [GENOMIC DNA]</scope>
    <source>
        <strain>Isolate 2</strain>
    </source>
</reference>